<name>BIOB_RHOPS</name>
<reference key="1">
    <citation type="submission" date="2006-03" db="EMBL/GenBank/DDBJ databases">
        <title>Complete sequence of Rhodopseudomonas palustris BisB5.</title>
        <authorList>
            <consortium name="US DOE Joint Genome Institute"/>
            <person name="Copeland A."/>
            <person name="Lucas S."/>
            <person name="Lapidus A."/>
            <person name="Barry K."/>
            <person name="Detter J.C."/>
            <person name="Glavina del Rio T."/>
            <person name="Hammon N."/>
            <person name="Israni S."/>
            <person name="Dalin E."/>
            <person name="Tice H."/>
            <person name="Pitluck S."/>
            <person name="Chain P."/>
            <person name="Malfatti S."/>
            <person name="Shin M."/>
            <person name="Vergez L."/>
            <person name="Schmutz J."/>
            <person name="Larimer F."/>
            <person name="Land M."/>
            <person name="Hauser L."/>
            <person name="Pelletier D.A."/>
            <person name="Kyrpides N."/>
            <person name="Lykidis A."/>
            <person name="Oda Y."/>
            <person name="Harwood C.S."/>
            <person name="Richardson P."/>
        </authorList>
    </citation>
    <scope>NUCLEOTIDE SEQUENCE [LARGE SCALE GENOMIC DNA]</scope>
    <source>
        <strain>BisB5</strain>
    </source>
</reference>
<sequence length="342" mass="36876">MNSIDLPSLAQALADSTPTIRHNWTREEAAAIYHAPFADLIFRAQTIHRQSFDANAVQCNQLLNVKTGGCAEDCGYCSQSSHHDTALPASKLMDPAKVIEGAKAARDAGATRYCMGAAWRSPKDRDMAPVIEMVKGVKALGMEACMTLGMLTDDQAKQLADAGLDYYNHNIDTSEEFYSSVVKTRSFGDRLETLEKVQDAGIKVCCGGILGLGEKPTDRVEMLRTLANLPQHPESVPINMLIPIEGTPIAATATPVDPFEFVRTIALARIMMPKSDVRLAAGRTAMSDEMQALCFLAGANSIFIGDTLLTTPNPGDSKDRALFARLGITPRDDLGVHAHGNA</sequence>
<protein>
    <recommendedName>
        <fullName evidence="1">Biotin synthase</fullName>
        <ecNumber evidence="1">2.8.1.6</ecNumber>
    </recommendedName>
</protein>
<evidence type="ECO:0000255" key="1">
    <source>
        <dbReference type="HAMAP-Rule" id="MF_01694"/>
    </source>
</evidence>
<evidence type="ECO:0000255" key="2">
    <source>
        <dbReference type="PROSITE-ProRule" id="PRU01266"/>
    </source>
</evidence>
<gene>
    <name evidence="1" type="primary">bioB</name>
    <name type="ordered locus">RPD_2111</name>
</gene>
<keyword id="KW-0001">2Fe-2S</keyword>
<keyword id="KW-0004">4Fe-4S</keyword>
<keyword id="KW-0093">Biotin biosynthesis</keyword>
<keyword id="KW-0408">Iron</keyword>
<keyword id="KW-0411">Iron-sulfur</keyword>
<keyword id="KW-0479">Metal-binding</keyword>
<keyword id="KW-0949">S-adenosyl-L-methionine</keyword>
<keyword id="KW-0808">Transferase</keyword>
<feature type="chain" id="PRO_0000381584" description="Biotin synthase">
    <location>
        <begin position="1"/>
        <end position="342"/>
    </location>
</feature>
<feature type="domain" description="Radical SAM core" evidence="2">
    <location>
        <begin position="55"/>
        <end position="274"/>
    </location>
</feature>
<feature type="binding site" evidence="1">
    <location>
        <position position="70"/>
    </location>
    <ligand>
        <name>[4Fe-4S] cluster</name>
        <dbReference type="ChEBI" id="CHEBI:49883"/>
        <note>4Fe-4S-S-AdoMet</note>
    </ligand>
</feature>
<feature type="binding site" evidence="1">
    <location>
        <position position="74"/>
    </location>
    <ligand>
        <name>[4Fe-4S] cluster</name>
        <dbReference type="ChEBI" id="CHEBI:49883"/>
        <note>4Fe-4S-S-AdoMet</note>
    </ligand>
</feature>
<feature type="binding site" evidence="1">
    <location>
        <position position="77"/>
    </location>
    <ligand>
        <name>[4Fe-4S] cluster</name>
        <dbReference type="ChEBI" id="CHEBI:49883"/>
        <note>4Fe-4S-S-AdoMet</note>
    </ligand>
</feature>
<feature type="binding site" evidence="1">
    <location>
        <position position="114"/>
    </location>
    <ligand>
        <name>[2Fe-2S] cluster</name>
        <dbReference type="ChEBI" id="CHEBI:190135"/>
    </ligand>
</feature>
<feature type="binding site" evidence="1">
    <location>
        <position position="145"/>
    </location>
    <ligand>
        <name>[2Fe-2S] cluster</name>
        <dbReference type="ChEBI" id="CHEBI:190135"/>
    </ligand>
</feature>
<feature type="binding site" evidence="1">
    <location>
        <position position="205"/>
    </location>
    <ligand>
        <name>[2Fe-2S] cluster</name>
        <dbReference type="ChEBI" id="CHEBI:190135"/>
    </ligand>
</feature>
<feature type="binding site" evidence="1">
    <location>
        <position position="278"/>
    </location>
    <ligand>
        <name>[2Fe-2S] cluster</name>
        <dbReference type="ChEBI" id="CHEBI:190135"/>
    </ligand>
</feature>
<dbReference type="EC" id="2.8.1.6" evidence="1"/>
<dbReference type="EMBL" id="CP000283">
    <property type="protein sequence ID" value="ABE39346.1"/>
    <property type="molecule type" value="Genomic_DNA"/>
</dbReference>
<dbReference type="SMR" id="Q138Z3"/>
<dbReference type="STRING" id="316057.RPD_2111"/>
<dbReference type="KEGG" id="rpd:RPD_2111"/>
<dbReference type="eggNOG" id="COG0502">
    <property type="taxonomic scope" value="Bacteria"/>
</dbReference>
<dbReference type="HOGENOM" id="CLU_033172_1_2_5"/>
<dbReference type="BioCyc" id="RPAL316057:RPD_RS10595-MONOMER"/>
<dbReference type="UniPathway" id="UPA00078">
    <property type="reaction ID" value="UER00162"/>
</dbReference>
<dbReference type="Proteomes" id="UP000001818">
    <property type="component" value="Chromosome"/>
</dbReference>
<dbReference type="GO" id="GO:0051537">
    <property type="term" value="F:2 iron, 2 sulfur cluster binding"/>
    <property type="evidence" value="ECO:0007669"/>
    <property type="project" value="UniProtKB-KW"/>
</dbReference>
<dbReference type="GO" id="GO:0051539">
    <property type="term" value="F:4 iron, 4 sulfur cluster binding"/>
    <property type="evidence" value="ECO:0007669"/>
    <property type="project" value="UniProtKB-KW"/>
</dbReference>
<dbReference type="GO" id="GO:0004076">
    <property type="term" value="F:biotin synthase activity"/>
    <property type="evidence" value="ECO:0007669"/>
    <property type="project" value="UniProtKB-UniRule"/>
</dbReference>
<dbReference type="GO" id="GO:0005506">
    <property type="term" value="F:iron ion binding"/>
    <property type="evidence" value="ECO:0007669"/>
    <property type="project" value="UniProtKB-UniRule"/>
</dbReference>
<dbReference type="GO" id="GO:0009102">
    <property type="term" value="P:biotin biosynthetic process"/>
    <property type="evidence" value="ECO:0007669"/>
    <property type="project" value="UniProtKB-UniRule"/>
</dbReference>
<dbReference type="CDD" id="cd01335">
    <property type="entry name" value="Radical_SAM"/>
    <property type="match status" value="1"/>
</dbReference>
<dbReference type="FunFam" id="3.20.20.70:FF:000011">
    <property type="entry name" value="Biotin synthase"/>
    <property type="match status" value="1"/>
</dbReference>
<dbReference type="Gene3D" id="3.20.20.70">
    <property type="entry name" value="Aldolase class I"/>
    <property type="match status" value="1"/>
</dbReference>
<dbReference type="HAMAP" id="MF_01694">
    <property type="entry name" value="BioB"/>
    <property type="match status" value="1"/>
</dbReference>
<dbReference type="InterPro" id="IPR013785">
    <property type="entry name" value="Aldolase_TIM"/>
</dbReference>
<dbReference type="InterPro" id="IPR010722">
    <property type="entry name" value="BATS_dom"/>
</dbReference>
<dbReference type="InterPro" id="IPR002684">
    <property type="entry name" value="Biotin_synth/BioAB"/>
</dbReference>
<dbReference type="InterPro" id="IPR024177">
    <property type="entry name" value="Biotin_synthase"/>
</dbReference>
<dbReference type="InterPro" id="IPR006638">
    <property type="entry name" value="Elp3/MiaA/NifB-like_rSAM"/>
</dbReference>
<dbReference type="InterPro" id="IPR007197">
    <property type="entry name" value="rSAM"/>
</dbReference>
<dbReference type="NCBIfam" id="TIGR00433">
    <property type="entry name" value="bioB"/>
    <property type="match status" value="1"/>
</dbReference>
<dbReference type="PANTHER" id="PTHR22976">
    <property type="entry name" value="BIOTIN SYNTHASE"/>
    <property type="match status" value="1"/>
</dbReference>
<dbReference type="PANTHER" id="PTHR22976:SF2">
    <property type="entry name" value="BIOTIN SYNTHASE, MITOCHONDRIAL"/>
    <property type="match status" value="1"/>
</dbReference>
<dbReference type="Pfam" id="PF06968">
    <property type="entry name" value="BATS"/>
    <property type="match status" value="1"/>
</dbReference>
<dbReference type="Pfam" id="PF04055">
    <property type="entry name" value="Radical_SAM"/>
    <property type="match status" value="1"/>
</dbReference>
<dbReference type="PIRSF" id="PIRSF001619">
    <property type="entry name" value="Biotin_synth"/>
    <property type="match status" value="1"/>
</dbReference>
<dbReference type="SFLD" id="SFLDF00272">
    <property type="entry name" value="biotin_synthase"/>
    <property type="match status" value="1"/>
</dbReference>
<dbReference type="SFLD" id="SFLDS00029">
    <property type="entry name" value="Radical_SAM"/>
    <property type="match status" value="1"/>
</dbReference>
<dbReference type="SMART" id="SM00876">
    <property type="entry name" value="BATS"/>
    <property type="match status" value="1"/>
</dbReference>
<dbReference type="SMART" id="SM00729">
    <property type="entry name" value="Elp3"/>
    <property type="match status" value="1"/>
</dbReference>
<dbReference type="SUPFAM" id="SSF102114">
    <property type="entry name" value="Radical SAM enzymes"/>
    <property type="match status" value="1"/>
</dbReference>
<dbReference type="PROSITE" id="PS51918">
    <property type="entry name" value="RADICAL_SAM"/>
    <property type="match status" value="1"/>
</dbReference>
<proteinExistence type="inferred from homology"/>
<accession>Q138Z3</accession>
<comment type="function">
    <text evidence="1">Catalyzes the conversion of dethiobiotin (DTB) to biotin by the insertion of a sulfur atom into dethiobiotin via a radical-based mechanism.</text>
</comment>
<comment type="catalytic activity">
    <reaction evidence="1">
        <text>(4R,5S)-dethiobiotin + (sulfur carrier)-SH + 2 reduced [2Fe-2S]-[ferredoxin] + 2 S-adenosyl-L-methionine = (sulfur carrier)-H + biotin + 2 5'-deoxyadenosine + 2 L-methionine + 2 oxidized [2Fe-2S]-[ferredoxin]</text>
        <dbReference type="Rhea" id="RHEA:22060"/>
        <dbReference type="Rhea" id="RHEA-COMP:10000"/>
        <dbReference type="Rhea" id="RHEA-COMP:10001"/>
        <dbReference type="Rhea" id="RHEA-COMP:14737"/>
        <dbReference type="Rhea" id="RHEA-COMP:14739"/>
        <dbReference type="ChEBI" id="CHEBI:17319"/>
        <dbReference type="ChEBI" id="CHEBI:29917"/>
        <dbReference type="ChEBI" id="CHEBI:33737"/>
        <dbReference type="ChEBI" id="CHEBI:33738"/>
        <dbReference type="ChEBI" id="CHEBI:57586"/>
        <dbReference type="ChEBI" id="CHEBI:57844"/>
        <dbReference type="ChEBI" id="CHEBI:59789"/>
        <dbReference type="ChEBI" id="CHEBI:64428"/>
        <dbReference type="ChEBI" id="CHEBI:149473"/>
        <dbReference type="EC" id="2.8.1.6"/>
    </reaction>
</comment>
<comment type="cofactor">
    <cofactor evidence="1">
        <name>[4Fe-4S] cluster</name>
        <dbReference type="ChEBI" id="CHEBI:49883"/>
    </cofactor>
    <text evidence="1">Binds 1 [4Fe-4S] cluster. The cluster is coordinated with 3 cysteines and an exchangeable S-adenosyl-L-methionine.</text>
</comment>
<comment type="cofactor">
    <cofactor evidence="1">
        <name>[2Fe-2S] cluster</name>
        <dbReference type="ChEBI" id="CHEBI:190135"/>
    </cofactor>
    <text evidence="1">Binds 1 [2Fe-2S] cluster. The cluster is coordinated with 3 cysteines and 1 arginine.</text>
</comment>
<comment type="pathway">
    <text evidence="1">Cofactor biosynthesis; biotin biosynthesis; biotin from 7,8-diaminononanoate: step 2/2.</text>
</comment>
<comment type="subunit">
    <text evidence="1">Homodimer.</text>
</comment>
<comment type="similarity">
    <text evidence="1">Belongs to the radical SAM superfamily. Biotin synthase family.</text>
</comment>
<organism>
    <name type="scientific">Rhodopseudomonas palustris (strain BisB5)</name>
    <dbReference type="NCBI Taxonomy" id="316057"/>
    <lineage>
        <taxon>Bacteria</taxon>
        <taxon>Pseudomonadati</taxon>
        <taxon>Pseudomonadota</taxon>
        <taxon>Alphaproteobacteria</taxon>
        <taxon>Hyphomicrobiales</taxon>
        <taxon>Nitrobacteraceae</taxon>
        <taxon>Rhodopseudomonas</taxon>
    </lineage>
</organism>